<comment type="similarity">
    <text evidence="1">Belongs to the UPF0728 family.</text>
</comment>
<name>CJ053_DANRE</name>
<organism>
    <name type="scientific">Danio rerio</name>
    <name type="common">Zebrafish</name>
    <name type="synonym">Brachydanio rerio</name>
    <dbReference type="NCBI Taxonomy" id="7955"/>
    <lineage>
        <taxon>Eukaryota</taxon>
        <taxon>Metazoa</taxon>
        <taxon>Chordata</taxon>
        <taxon>Craniata</taxon>
        <taxon>Vertebrata</taxon>
        <taxon>Euteleostomi</taxon>
        <taxon>Actinopterygii</taxon>
        <taxon>Neopterygii</taxon>
        <taxon>Teleostei</taxon>
        <taxon>Ostariophysi</taxon>
        <taxon>Cypriniformes</taxon>
        <taxon>Danionidae</taxon>
        <taxon>Danioninae</taxon>
        <taxon>Danio</taxon>
    </lineage>
</organism>
<keyword id="KW-1185">Reference proteome</keyword>
<gene>
    <name type="ORF">zgc:153142</name>
</gene>
<proteinExistence type="inferred from homology"/>
<reference key="1">
    <citation type="submission" date="2006-10" db="EMBL/GenBank/DDBJ databases">
        <authorList>
            <consortium name="NIH - Zebrafish Gene Collection (ZGC) project"/>
        </authorList>
    </citation>
    <scope>NUCLEOTIDE SEQUENCE [LARGE SCALE MRNA]</scope>
    <source>
        <tissue>Olfactory epithelium</tissue>
    </source>
</reference>
<accession>Q08BN1</accession>
<dbReference type="EMBL" id="BC124646">
    <property type="protein sequence ID" value="AAI24647.1"/>
    <property type="molecule type" value="mRNA"/>
</dbReference>
<dbReference type="RefSeq" id="NP_001070807.1">
    <property type="nucleotide sequence ID" value="NM_001077339.1"/>
</dbReference>
<dbReference type="FunCoup" id="Q08BN1">
    <property type="interactions" value="78"/>
</dbReference>
<dbReference type="PaxDb" id="7955-ENSDARP00000091650"/>
<dbReference type="Ensembl" id="ENSDART00000100877">
    <property type="protein sequence ID" value="ENSDARP00000091650"/>
    <property type="gene ID" value="ENSDARG00000069363"/>
</dbReference>
<dbReference type="GeneID" id="768197"/>
<dbReference type="KEGG" id="dre:768197"/>
<dbReference type="AGR" id="ZFIN:ZDB-GENE-061013-507"/>
<dbReference type="ZFIN" id="ZDB-GENE-061013-507">
    <property type="gene designation" value="zgc:153142"/>
</dbReference>
<dbReference type="eggNOG" id="ENOG502S4W1">
    <property type="taxonomic scope" value="Eukaryota"/>
</dbReference>
<dbReference type="HOGENOM" id="CLU_189555_0_0_1"/>
<dbReference type="InParanoid" id="Q08BN1"/>
<dbReference type="OMA" id="VEHRTYR"/>
<dbReference type="OrthoDB" id="10003460at2759"/>
<dbReference type="PhylomeDB" id="Q08BN1"/>
<dbReference type="TreeFam" id="TF329673"/>
<dbReference type="PRO" id="PR:Q08BN1"/>
<dbReference type="Proteomes" id="UP000000437">
    <property type="component" value="Chromosome 13"/>
</dbReference>
<dbReference type="Bgee" id="ENSDARG00000069363">
    <property type="expression patterns" value="Expressed in testis and 6 other cell types or tissues"/>
</dbReference>
<dbReference type="InterPro" id="IPR027885">
    <property type="entry name" value="UPF0728"/>
</dbReference>
<dbReference type="PANTHER" id="PTHR28448">
    <property type="entry name" value="UPF0728 PROTEIN C10ORF53"/>
    <property type="match status" value="1"/>
</dbReference>
<dbReference type="PANTHER" id="PTHR28448:SF1">
    <property type="entry name" value="UPF0728 PROTEIN C10ORF53"/>
    <property type="match status" value="1"/>
</dbReference>
<dbReference type="Pfam" id="PF15092">
    <property type="entry name" value="UPF0728"/>
    <property type="match status" value="1"/>
</dbReference>
<protein>
    <recommendedName>
        <fullName>UPF0728 protein C10orf53 homolog</fullName>
    </recommendedName>
</protein>
<evidence type="ECO:0000305" key="1"/>
<sequence>MPTNSIVTIRYGPYDSCGIVDHRTFRLDGLQAVLKGDGHRYVLEKTDDWNTVELIVNGERVYTCNITDLVFGGDGRLDPLCQEAIDAVREAY</sequence>
<feature type="chain" id="PRO_0000351544" description="UPF0728 protein C10orf53 homolog">
    <location>
        <begin position="1"/>
        <end position="92"/>
    </location>
</feature>